<protein>
    <recommendedName>
        <fullName evidence="9">NADH-cytochrome b5 reductase 2</fullName>
        <shortName>b5R.2</shortName>
        <ecNumber evidence="10">1.6.2.2</ecNumber>
    </recommendedName>
</protein>
<reference key="1">
    <citation type="journal article" date="1999" name="Proc. Natl. Acad. Sci. U.S.A.">
        <title>Identification of a cytochrome b-type NAD(P)H oxidoreductase ubiquitously expressed in human cells.</title>
        <authorList>
            <person name="Zhu H."/>
            <person name="Qiu H."/>
            <person name="Yoon H.-W."/>
            <person name="Huang S."/>
            <person name="Bunn H.F."/>
        </authorList>
    </citation>
    <scope>NUCLEOTIDE SEQUENCE [MRNA] (ISOFORM 1)</scope>
    <scope>TISSUE SPECIFICITY</scope>
    <scope>VARIANT ASP-209</scope>
</reference>
<reference key="2">
    <citation type="journal article" date="2005" name="Biol. Reprod.">
        <title>Identification of cytochrome-b5 reductase as the enzyme responsible for NADH-dependent lucigenin chemiluminescence in human spermatozoa.</title>
        <authorList>
            <person name="Baker M.A."/>
            <person name="Krutskikh A."/>
            <person name="Curry B.J."/>
            <person name="Hetherington L."/>
            <person name="Aitken R.J."/>
        </authorList>
    </citation>
    <scope>NUCLEOTIDE SEQUENCE [MRNA] (ISOFORM 1)</scope>
    <scope>FUNCTION</scope>
    <scope>CATALYTIC ACTIVITY</scope>
    <scope>IDENTIFICATION BY MASS SPECTROMETRY</scope>
</reference>
<reference key="3">
    <citation type="journal article" date="2004" name="Genome Res.">
        <title>The status, quality, and expansion of the NIH full-length cDNA project: the Mammalian Gene Collection (MGC).</title>
        <authorList>
            <consortium name="The MGC Project Team"/>
        </authorList>
    </citation>
    <scope>NUCLEOTIDE SEQUENCE [LARGE SCALE MRNA] (ISOFORM 2)</scope>
    <scope>VARIANT ASP-209</scope>
    <source>
        <tissue>Placenta</tissue>
    </source>
</reference>
<reference key="4">
    <citation type="journal article" date="2007" name="BMC Genomics">
        <title>The full-ORF clone resource of the German cDNA consortium.</title>
        <authorList>
            <person name="Bechtel S."/>
            <person name="Rosenfelder H."/>
            <person name="Duda A."/>
            <person name="Schmidt C.P."/>
            <person name="Ernst U."/>
            <person name="Wellenreuther R."/>
            <person name="Mehrle A."/>
            <person name="Schuster C."/>
            <person name="Bahr A."/>
            <person name="Bloecker H."/>
            <person name="Heubner D."/>
            <person name="Hoerlein A."/>
            <person name="Michel G."/>
            <person name="Wedler H."/>
            <person name="Koehrer K."/>
            <person name="Ottenwaelder B."/>
            <person name="Poustka A."/>
            <person name="Wiemann S."/>
            <person name="Schupp I."/>
        </authorList>
    </citation>
    <scope>NUCLEOTIDE SEQUENCE [LARGE SCALE MRNA] OF 7-276 (ISOFORM 1)</scope>
    <scope>VARIANT ASP-209</scope>
    <source>
        <tissue>Testis</tissue>
    </source>
</reference>
<proteinExistence type="evidence at protein level"/>
<evidence type="ECO:0000250" key="1"/>
<evidence type="ECO:0000250" key="2">
    <source>
        <dbReference type="UniProtKB" id="P00387"/>
    </source>
</evidence>
<evidence type="ECO:0000255" key="3">
    <source>
        <dbReference type="PROSITE-ProRule" id="PRU00716"/>
    </source>
</evidence>
<evidence type="ECO:0000269" key="4">
    <source>
    </source>
</evidence>
<evidence type="ECO:0000269" key="5">
    <source>
    </source>
</evidence>
<evidence type="ECO:0000269" key="6">
    <source>
    </source>
</evidence>
<evidence type="ECO:0000269" key="7">
    <source>
    </source>
</evidence>
<evidence type="ECO:0000303" key="8">
    <source>
    </source>
</evidence>
<evidence type="ECO:0000305" key="9"/>
<evidence type="ECO:0000305" key="10">
    <source>
    </source>
</evidence>
<evidence type="ECO:0000312" key="11">
    <source>
        <dbReference type="HGNC" id="HGNC:24376"/>
    </source>
</evidence>
<gene>
    <name evidence="11" type="primary">CYB5R2</name>
</gene>
<comment type="function">
    <text evidence="1 6">NADH-cytochrome b5 reductases are involved in desaturation and elongation of fatty acids, cholesterol biosynthesis, drug metabolism, and, in erythrocyte, methemoglobin reduction (By similarity). Responsible for NADH-dependent lucigenin chemiluminescence in spermatozoa by reducing both lucigenin and 2-[4-iodophenyl]-3-[4-nitrophenyl]-5-[2,4-disulfophenyl]-2H tetrazolium monosodium salt (WST-1).</text>
</comment>
<comment type="catalytic activity">
    <reaction evidence="10">
        <text>2 Fe(III)-[cytochrome b5] + NADH = 2 Fe(II)-[cytochrome b5] + NAD(+) + H(+)</text>
        <dbReference type="Rhea" id="RHEA:46680"/>
        <dbReference type="Rhea" id="RHEA-COMP:10438"/>
        <dbReference type="Rhea" id="RHEA-COMP:10439"/>
        <dbReference type="ChEBI" id="CHEBI:15378"/>
        <dbReference type="ChEBI" id="CHEBI:29033"/>
        <dbReference type="ChEBI" id="CHEBI:29034"/>
        <dbReference type="ChEBI" id="CHEBI:57540"/>
        <dbReference type="ChEBI" id="CHEBI:57945"/>
        <dbReference type="EC" id="1.6.2.2"/>
    </reaction>
</comment>
<comment type="cofactor">
    <cofactor evidence="1">
        <name>FAD</name>
        <dbReference type="ChEBI" id="CHEBI:57692"/>
    </cofactor>
</comment>
<comment type="interaction">
    <interactant intactId="EBI-744761">
        <id>Q6BCY4</id>
    </interactant>
    <interactant intactId="EBI-396137">
        <id>Q9UJX2</id>
        <label>CDC23</label>
    </interactant>
    <organismsDiffer>false</organismsDiffer>
    <experiments>3</experiments>
</comment>
<comment type="interaction">
    <interactant intactId="EBI-744761">
        <id>Q6BCY4</id>
    </interactant>
    <interactant intactId="EBI-618309">
        <id>Q08379</id>
        <label>GOLGA2</label>
    </interactant>
    <organismsDiffer>false</organismsDiffer>
    <experiments>3</experiments>
</comment>
<comment type="interaction">
    <interactant intactId="EBI-744761">
        <id>Q6BCY4</id>
    </interactant>
    <interactant intactId="EBI-357669">
        <id>P62333</id>
        <label>PSMC6</label>
    </interactant>
    <organismsDiffer>false</organismsDiffer>
    <experiments>3</experiments>
</comment>
<comment type="interaction">
    <interactant intactId="EBI-744761">
        <id>Q6BCY4</id>
    </interactant>
    <interactant intactId="EBI-359224">
        <id>Q13077</id>
        <label>TRAF1</label>
    </interactant>
    <organismsDiffer>false</organismsDiffer>
    <experiments>3</experiments>
</comment>
<comment type="interaction">
    <interactant intactId="EBI-744761">
        <id>Q6BCY4</id>
    </interactant>
    <interactant intactId="EBI-355744">
        <id>Q12933</id>
        <label>TRAF2</label>
    </interactant>
    <organismsDiffer>false</organismsDiffer>
    <experiments>3</experiments>
</comment>
<comment type="interaction">
    <interactant intactId="EBI-744761">
        <id>Q6BCY4</id>
    </interactant>
    <interactant intactId="EBI-358993">
        <id>Q15645</id>
        <label>TRIP13</label>
    </interactant>
    <organismsDiffer>false</organismsDiffer>
    <experiments>4</experiments>
</comment>
<comment type="interaction">
    <interactant intactId="EBI-12102608">
        <id>Q6BCY4-2</id>
    </interactant>
    <interactant intactId="EBI-712648">
        <id>O95994</id>
        <label>AGR2</label>
    </interactant>
    <organismsDiffer>false</organismsDiffer>
    <experiments>3</experiments>
</comment>
<comment type="interaction">
    <interactant intactId="EBI-12102608">
        <id>Q6BCY4-2</id>
    </interactant>
    <interactant intactId="EBI-2339898">
        <id>Q9NW38</id>
        <label>FANCL</label>
    </interactant>
    <organismsDiffer>false</organismsDiffer>
    <experiments>3</experiments>
</comment>
<comment type="interaction">
    <interactant intactId="EBI-12102608">
        <id>Q6BCY4-2</id>
    </interactant>
    <interactant intactId="EBI-618309">
        <id>Q08379</id>
        <label>GOLGA2</label>
    </interactant>
    <organismsDiffer>false</organismsDiffer>
    <experiments>3</experiments>
</comment>
<comment type="interaction">
    <interactant intactId="EBI-12102608">
        <id>Q6BCY4-2</id>
    </interactant>
    <interactant intactId="EBI-740220">
        <id>O14964</id>
        <label>HGS</label>
    </interactant>
    <organismsDiffer>false</organismsDiffer>
    <experiments>3</experiments>
</comment>
<comment type="interaction">
    <interactant intactId="EBI-12102608">
        <id>Q6BCY4-2</id>
    </interactant>
    <interactant intactId="EBI-394644">
        <id>Q9H944</id>
        <label>MED20</label>
    </interactant>
    <organismsDiffer>false</organismsDiffer>
    <experiments>3</experiments>
</comment>
<comment type="interaction">
    <interactant intactId="EBI-12102608">
        <id>Q6BCY4-2</id>
    </interactant>
    <interactant intactId="EBI-16439278">
        <id>Q6FHY5</id>
        <label>MEOX2</label>
    </interactant>
    <organismsDiffer>false</organismsDiffer>
    <experiments>3</experiments>
</comment>
<comment type="interaction">
    <interactant intactId="EBI-12102608">
        <id>Q6BCY4-2</id>
    </interactant>
    <interactant intactId="EBI-10271199">
        <id>Q8NI38</id>
        <label>NFKBID</label>
    </interactant>
    <organismsDiffer>false</organismsDiffer>
    <experiments>3</experiments>
</comment>
<comment type="interaction">
    <interactant intactId="EBI-12102608">
        <id>Q6BCY4-2</id>
    </interactant>
    <interactant intactId="EBI-10829018">
        <id>Q04864-2</id>
        <label>REL</label>
    </interactant>
    <organismsDiffer>false</organismsDiffer>
    <experiments>3</experiments>
</comment>
<comment type="interaction">
    <interactant intactId="EBI-12102608">
        <id>Q6BCY4-2</id>
    </interactant>
    <interactant intactId="EBI-3921347">
        <id>P51687</id>
        <label>SUOX</label>
    </interactant>
    <organismsDiffer>false</organismsDiffer>
    <experiments>3</experiments>
</comment>
<comment type="interaction">
    <interactant intactId="EBI-12102608">
        <id>Q6BCY4-2</id>
    </interactant>
    <interactant intactId="EBI-355744">
        <id>Q12933</id>
        <label>TRAF2</label>
    </interactant>
    <organismsDiffer>false</organismsDiffer>
    <experiments>3</experiments>
</comment>
<comment type="interaction">
    <interactant intactId="EBI-12102608">
        <id>Q6BCY4-2</id>
    </interactant>
    <interactant intactId="EBI-358993">
        <id>Q15645</id>
        <label>TRIP13</label>
    </interactant>
    <organismsDiffer>false</organismsDiffer>
    <experiments>3</experiments>
</comment>
<comment type="interaction">
    <interactant intactId="EBI-12102608">
        <id>Q6BCY4-2</id>
    </interactant>
    <interactant intactId="EBI-14242669">
        <id>Q96MU6-2</id>
        <label>ZNF778</label>
    </interactant>
    <organismsDiffer>false</organismsDiffer>
    <experiments>3</experiments>
</comment>
<comment type="alternative products">
    <event type="alternative splicing"/>
    <isoform>
        <id>Q6BCY4-1</id>
        <name>1</name>
        <sequence type="displayed"/>
    </isoform>
    <isoform>
        <id>Q6BCY4-2</id>
        <name>2</name>
        <sequence type="described" ref="VSP_025559"/>
    </isoform>
</comment>
<comment type="tissue specificity">
    <text evidence="4">Restricted expression.</text>
</comment>
<comment type="similarity">
    <text evidence="9">Belongs to the flavoprotein pyridine nucleotide cytochrome reductase family.</text>
</comment>
<feature type="chain" id="PRO_0000287548" description="NADH-cytochrome b5 reductase 2">
    <location>
        <begin position="1"/>
        <end position="276"/>
    </location>
</feature>
<feature type="domain" description="FAD-binding FR-type" evidence="3">
    <location>
        <begin position="15"/>
        <end position="127"/>
    </location>
</feature>
<feature type="binding site" evidence="1">
    <location>
        <begin position="107"/>
        <end position="137"/>
    </location>
    <ligand>
        <name>FAD</name>
        <dbReference type="ChEBI" id="CHEBI:57692"/>
    </ligand>
</feature>
<feature type="binding site" evidence="1">
    <location>
        <begin position="146"/>
        <end position="181"/>
    </location>
    <ligand>
        <name>FAD</name>
        <dbReference type="ChEBI" id="CHEBI:57692"/>
    </ligand>
</feature>
<feature type="modified residue" description="N6-acetyllysine" evidence="2">
    <location>
        <position position="17"/>
    </location>
</feature>
<feature type="modified residue" description="Phosphotyrosine" evidence="2">
    <location>
        <position position="18"/>
    </location>
</feature>
<feature type="splice variant" id="VSP_025559" description="In isoform 2." evidence="8">
    <original>WKYSSGFVTADMIKEHLPPPAKSTLILVCGPPPLIQTAAHPNLEKLGYTQDMIFTY</original>
    <variation>PWSAEGATLLSNSAQFH</variation>
    <location>
        <begin position="221"/>
        <end position="276"/>
    </location>
</feature>
<feature type="sequence variant" id="VAR_032321" description="In dbSNP:rs11041525.">
    <original>E</original>
    <variation>A</variation>
    <location>
        <position position="15"/>
    </location>
</feature>
<feature type="sequence variant" id="VAR_032322" description="In dbSNP:rs12801394." evidence="4 5 7">
    <original>N</original>
    <variation>D</variation>
    <location>
        <position position="209"/>
    </location>
</feature>
<feature type="sequence conflict" description="In Ref. 1; AAF04811." evidence="9" ref="1">
    <original>G</original>
    <variation>R</variation>
    <location>
        <position position="130"/>
    </location>
</feature>
<feature type="sequence conflict" description="In Ref. 1; AAF04811." evidence="9" ref="1">
    <original>P</original>
    <variation>T</variation>
    <location>
        <position position="253"/>
    </location>
</feature>
<accession>Q6BCY4</accession>
<accession>Q9BVA3</accession>
<accession>Q9UF68</accession>
<accession>Q9UHJ0</accession>
<dbReference type="EC" id="1.6.2.2" evidence="10"/>
<dbReference type="EMBL" id="AF169802">
    <property type="protein sequence ID" value="AAF04811.1"/>
    <property type="molecule type" value="mRNA"/>
</dbReference>
<dbReference type="EMBL" id="AY665398">
    <property type="protein sequence ID" value="AAT75296.1"/>
    <property type="molecule type" value="mRNA"/>
</dbReference>
<dbReference type="EMBL" id="BC001346">
    <property type="protein sequence ID" value="AAH01346.1"/>
    <property type="molecule type" value="mRNA"/>
</dbReference>
<dbReference type="EMBL" id="AL133582">
    <property type="protein sequence ID" value="CAB63726.1"/>
    <property type="molecule type" value="mRNA"/>
</dbReference>
<dbReference type="CCDS" id="CCDS7780.1">
    <molecule id="Q6BCY4-1"/>
</dbReference>
<dbReference type="PIR" id="T43491">
    <property type="entry name" value="T43491"/>
</dbReference>
<dbReference type="RefSeq" id="NP_001289755.1">
    <molecule id="Q6BCY4-1"/>
    <property type="nucleotide sequence ID" value="NM_001302826.2"/>
</dbReference>
<dbReference type="RefSeq" id="NP_057313.2">
    <molecule id="Q6BCY4-1"/>
    <property type="nucleotide sequence ID" value="NM_016229.4"/>
</dbReference>
<dbReference type="RefSeq" id="XP_005253032.1">
    <property type="nucleotide sequence ID" value="XM_005252975.4"/>
</dbReference>
<dbReference type="RefSeq" id="XP_006718314.1">
    <molecule id="Q6BCY4-1"/>
    <property type="nucleotide sequence ID" value="XM_006718251.4"/>
</dbReference>
<dbReference type="RefSeq" id="XP_011518486.2">
    <molecule id="Q6BCY4-1"/>
    <property type="nucleotide sequence ID" value="XM_011520184.3"/>
</dbReference>
<dbReference type="RefSeq" id="XP_024304348.1">
    <molecule id="Q6BCY4-1"/>
    <property type="nucleotide sequence ID" value="XM_024448580.2"/>
</dbReference>
<dbReference type="RefSeq" id="XP_047283080.1">
    <molecule id="Q6BCY4-1"/>
    <property type="nucleotide sequence ID" value="XM_047427124.1"/>
</dbReference>
<dbReference type="SMR" id="Q6BCY4"/>
<dbReference type="BioGRID" id="119684">
    <property type="interactions" value="34"/>
</dbReference>
<dbReference type="FunCoup" id="Q6BCY4">
    <property type="interactions" value="1194"/>
</dbReference>
<dbReference type="IntAct" id="Q6BCY4">
    <property type="interactions" value="23"/>
</dbReference>
<dbReference type="STRING" id="9606.ENSP00000437041"/>
<dbReference type="iPTMnet" id="Q6BCY4"/>
<dbReference type="PhosphoSitePlus" id="Q6BCY4"/>
<dbReference type="BioMuta" id="CYB5R2"/>
<dbReference type="DMDM" id="74709211"/>
<dbReference type="REPRODUCTION-2DPAGE" id="IPI00332396"/>
<dbReference type="jPOST" id="Q6BCY4"/>
<dbReference type="MassIVE" id="Q6BCY4"/>
<dbReference type="PaxDb" id="9606-ENSP00000437041"/>
<dbReference type="PeptideAtlas" id="Q6BCY4"/>
<dbReference type="ProteomicsDB" id="66216">
    <molecule id="Q6BCY4-1"/>
</dbReference>
<dbReference type="ProteomicsDB" id="66217">
    <molecule id="Q6BCY4-2"/>
</dbReference>
<dbReference type="Pumba" id="Q6BCY4"/>
<dbReference type="Antibodypedia" id="24030">
    <property type="antibodies" value="128 antibodies from 22 providers"/>
</dbReference>
<dbReference type="DNASU" id="51700"/>
<dbReference type="Ensembl" id="ENST00000299498.11">
    <molecule id="Q6BCY4-1"/>
    <property type="protein sequence ID" value="ENSP00000299498.6"/>
    <property type="gene ID" value="ENSG00000166394.15"/>
</dbReference>
<dbReference type="Ensembl" id="ENST00000524790.5">
    <molecule id="Q6BCY4-2"/>
    <property type="protein sequence ID" value="ENSP00000435916.1"/>
    <property type="gene ID" value="ENSG00000166394.15"/>
</dbReference>
<dbReference type="Ensembl" id="ENST00000533558.5">
    <molecule id="Q6BCY4-1"/>
    <property type="protein sequence ID" value="ENSP00000437041.1"/>
    <property type="gene ID" value="ENSG00000166394.15"/>
</dbReference>
<dbReference type="GeneID" id="51700"/>
<dbReference type="KEGG" id="hsa:51700"/>
<dbReference type="MANE-Select" id="ENST00000299498.11">
    <property type="protein sequence ID" value="ENSP00000299498.6"/>
    <property type="RefSeq nucleotide sequence ID" value="NM_016229.5"/>
    <property type="RefSeq protein sequence ID" value="NP_057313.2"/>
</dbReference>
<dbReference type="UCSC" id="uc001mfm.4">
    <molecule id="Q6BCY4-1"/>
    <property type="organism name" value="human"/>
</dbReference>
<dbReference type="AGR" id="HGNC:24376"/>
<dbReference type="CTD" id="51700"/>
<dbReference type="DisGeNET" id="51700"/>
<dbReference type="GeneCards" id="CYB5R2"/>
<dbReference type="HGNC" id="HGNC:24376">
    <property type="gene designation" value="CYB5R2"/>
</dbReference>
<dbReference type="HPA" id="ENSG00000166394">
    <property type="expression patterns" value="Tissue enhanced (retina, testis)"/>
</dbReference>
<dbReference type="MalaCards" id="CYB5R2"/>
<dbReference type="MIM" id="608342">
    <property type="type" value="gene"/>
</dbReference>
<dbReference type="neXtProt" id="NX_Q6BCY4"/>
<dbReference type="OpenTargets" id="ENSG00000166394"/>
<dbReference type="PharmGKB" id="PA142672060"/>
<dbReference type="VEuPathDB" id="HostDB:ENSG00000166394"/>
<dbReference type="eggNOG" id="KOG0534">
    <property type="taxonomic scope" value="Eukaryota"/>
</dbReference>
<dbReference type="GeneTree" id="ENSGT00940000153962"/>
<dbReference type="HOGENOM" id="CLU_003827_9_2_1"/>
<dbReference type="InParanoid" id="Q6BCY4"/>
<dbReference type="OMA" id="LDMKGPF"/>
<dbReference type="OrthoDB" id="432685at2759"/>
<dbReference type="PAN-GO" id="Q6BCY4">
    <property type="GO annotations" value="1 GO annotation based on evolutionary models"/>
</dbReference>
<dbReference type="PhylomeDB" id="Q6BCY4"/>
<dbReference type="TreeFam" id="TF314333"/>
<dbReference type="BRENDA" id="1.6.2.2">
    <property type="organism ID" value="2681"/>
</dbReference>
<dbReference type="PathwayCommons" id="Q6BCY4"/>
<dbReference type="Reactome" id="R-HSA-1237044">
    <property type="pathway name" value="Erythrocytes take up carbon dioxide and release oxygen"/>
</dbReference>
<dbReference type="SignaLink" id="Q6BCY4"/>
<dbReference type="BioGRID-ORCS" id="51700">
    <property type="hits" value="11 hits in 1159 CRISPR screens"/>
</dbReference>
<dbReference type="CD-CODE" id="91857CE7">
    <property type="entry name" value="Nucleolus"/>
</dbReference>
<dbReference type="GeneWiki" id="CYB5R2"/>
<dbReference type="GenomeRNAi" id="51700"/>
<dbReference type="Pharos" id="Q6BCY4">
    <property type="development level" value="Tbio"/>
</dbReference>
<dbReference type="PRO" id="PR:Q6BCY4"/>
<dbReference type="Proteomes" id="UP000005640">
    <property type="component" value="Chromosome 11"/>
</dbReference>
<dbReference type="RNAct" id="Q6BCY4">
    <property type="molecule type" value="protein"/>
</dbReference>
<dbReference type="Bgee" id="ENSG00000166394">
    <property type="expression patterns" value="Expressed in left testis and 169 other cell types or tissues"/>
</dbReference>
<dbReference type="ExpressionAtlas" id="Q6BCY4">
    <property type="expression patterns" value="baseline and differential"/>
</dbReference>
<dbReference type="GO" id="GO:0005789">
    <property type="term" value="C:endoplasmic reticulum membrane"/>
    <property type="evidence" value="ECO:0000304"/>
    <property type="project" value="Reactome"/>
</dbReference>
<dbReference type="GO" id="GO:0016020">
    <property type="term" value="C:membrane"/>
    <property type="evidence" value="ECO:0000314"/>
    <property type="project" value="UniProtKB"/>
</dbReference>
<dbReference type="GO" id="GO:0005739">
    <property type="term" value="C:mitochondrion"/>
    <property type="evidence" value="ECO:0000318"/>
    <property type="project" value="GO_Central"/>
</dbReference>
<dbReference type="GO" id="GO:0005634">
    <property type="term" value="C:nucleus"/>
    <property type="evidence" value="ECO:0007005"/>
    <property type="project" value="UniProtKB"/>
</dbReference>
<dbReference type="GO" id="GO:0004128">
    <property type="term" value="F:cytochrome-b5 reductase activity, acting on NAD(P)H"/>
    <property type="evidence" value="ECO:0000314"/>
    <property type="project" value="UniProtKB"/>
</dbReference>
<dbReference type="GO" id="GO:0071949">
    <property type="term" value="F:FAD binding"/>
    <property type="evidence" value="ECO:0000318"/>
    <property type="project" value="GO_Central"/>
</dbReference>
<dbReference type="GO" id="GO:0015701">
    <property type="term" value="P:bicarbonate transport"/>
    <property type="evidence" value="ECO:0000304"/>
    <property type="project" value="Reactome"/>
</dbReference>
<dbReference type="GO" id="GO:0016126">
    <property type="term" value="P:sterol biosynthetic process"/>
    <property type="evidence" value="ECO:0007669"/>
    <property type="project" value="UniProtKB-KW"/>
</dbReference>
<dbReference type="CDD" id="cd06183">
    <property type="entry name" value="cyt_b5_reduct_like"/>
    <property type="match status" value="1"/>
</dbReference>
<dbReference type="FunFam" id="2.40.30.10:FF:000021">
    <property type="entry name" value="NADH-cytochrome b5 reductase"/>
    <property type="match status" value="1"/>
</dbReference>
<dbReference type="FunFam" id="3.40.50.80:FF:000005">
    <property type="entry name" value="NADH-cytochrome b5 reductase"/>
    <property type="match status" value="1"/>
</dbReference>
<dbReference type="Gene3D" id="3.40.50.80">
    <property type="entry name" value="Nucleotide-binding domain of ferredoxin-NADP reductase (FNR) module"/>
    <property type="match status" value="1"/>
</dbReference>
<dbReference type="Gene3D" id="2.40.30.10">
    <property type="entry name" value="Translation factors"/>
    <property type="match status" value="1"/>
</dbReference>
<dbReference type="InterPro" id="IPR001834">
    <property type="entry name" value="CBR-like"/>
</dbReference>
<dbReference type="InterPro" id="IPR008333">
    <property type="entry name" value="Cbr1-like_FAD-bd_dom"/>
</dbReference>
<dbReference type="InterPro" id="IPR017927">
    <property type="entry name" value="FAD-bd_FR_type"/>
</dbReference>
<dbReference type="InterPro" id="IPR001709">
    <property type="entry name" value="Flavoprot_Pyr_Nucl_cyt_Rdtase"/>
</dbReference>
<dbReference type="InterPro" id="IPR039261">
    <property type="entry name" value="FNR_nucleotide-bd"/>
</dbReference>
<dbReference type="InterPro" id="IPR001433">
    <property type="entry name" value="OxRdtase_FAD/NAD-bd"/>
</dbReference>
<dbReference type="InterPro" id="IPR017938">
    <property type="entry name" value="Riboflavin_synthase-like_b-brl"/>
</dbReference>
<dbReference type="PANTHER" id="PTHR19370">
    <property type="entry name" value="NADH-CYTOCHROME B5 REDUCTASE"/>
    <property type="match status" value="1"/>
</dbReference>
<dbReference type="PANTHER" id="PTHR19370:SF108">
    <property type="entry name" value="NADH-CYTOCHROME B5 REDUCTASE 2"/>
    <property type="match status" value="1"/>
</dbReference>
<dbReference type="Pfam" id="PF00970">
    <property type="entry name" value="FAD_binding_6"/>
    <property type="match status" value="1"/>
</dbReference>
<dbReference type="Pfam" id="PF00175">
    <property type="entry name" value="NAD_binding_1"/>
    <property type="match status" value="1"/>
</dbReference>
<dbReference type="PRINTS" id="PR00406">
    <property type="entry name" value="CYTB5RDTASE"/>
</dbReference>
<dbReference type="PRINTS" id="PR00371">
    <property type="entry name" value="FPNCR"/>
</dbReference>
<dbReference type="SUPFAM" id="SSF52343">
    <property type="entry name" value="Ferredoxin reductase-like, C-terminal NADP-linked domain"/>
    <property type="match status" value="1"/>
</dbReference>
<dbReference type="SUPFAM" id="SSF63380">
    <property type="entry name" value="Riboflavin synthase domain-like"/>
    <property type="match status" value="1"/>
</dbReference>
<dbReference type="PROSITE" id="PS51384">
    <property type="entry name" value="FAD_FR"/>
    <property type="match status" value="1"/>
</dbReference>
<organism>
    <name type="scientific">Homo sapiens</name>
    <name type="common">Human</name>
    <dbReference type="NCBI Taxonomy" id="9606"/>
    <lineage>
        <taxon>Eukaryota</taxon>
        <taxon>Metazoa</taxon>
        <taxon>Chordata</taxon>
        <taxon>Craniata</taxon>
        <taxon>Vertebrata</taxon>
        <taxon>Euteleostomi</taxon>
        <taxon>Mammalia</taxon>
        <taxon>Eutheria</taxon>
        <taxon>Euarchontoglires</taxon>
        <taxon>Primates</taxon>
        <taxon>Haplorrhini</taxon>
        <taxon>Catarrhini</taxon>
        <taxon>Hominidae</taxon>
        <taxon>Homo</taxon>
    </lineage>
</organism>
<sequence>MNSRRREPITLQDPEAKYPLPLIEKEKISHNTRRFRFGLPSPDHVLGLPVGNYVQLLAKIDNELVVRAYTPVSSDDDRGFVDLIIKIYFKNVHPQYPEGGKMTQYLENMKIGETIFFRGPRGRLFYHGPGNLGIRPDQTSEPKKTLADHLGMIAGGTGITPMLQLIRHITKDPSDRTRMSLIFANQTEEDILVRKELEEIARTHPDQFNLWYTLDRPPIGWKYSSGFVTADMIKEHLPPPAKSTLILVCGPPPLIQTAAHPNLEKLGYTQDMIFTY</sequence>
<name>NB5R2_HUMAN</name>
<keyword id="KW-0007">Acetylation</keyword>
<keyword id="KW-0025">Alternative splicing</keyword>
<keyword id="KW-0274">FAD</keyword>
<keyword id="KW-0285">Flavoprotein</keyword>
<keyword id="KW-0444">Lipid biosynthesis</keyword>
<keyword id="KW-0443">Lipid metabolism</keyword>
<keyword id="KW-0520">NAD</keyword>
<keyword id="KW-0560">Oxidoreductase</keyword>
<keyword id="KW-0597">Phosphoprotein</keyword>
<keyword id="KW-1267">Proteomics identification</keyword>
<keyword id="KW-1185">Reference proteome</keyword>
<keyword id="KW-0752">Steroid biosynthesis</keyword>
<keyword id="KW-0753">Steroid metabolism</keyword>
<keyword id="KW-0756">Sterol biosynthesis</keyword>
<keyword id="KW-1207">Sterol metabolism</keyword>